<reference key="1">
    <citation type="journal article" date="1995" name="Gene">
        <title>Identification and expression of a homologue of the murine HoxA5 gene in the Mexican axolotl (Ambystoma mexicanum).</title>
        <authorList>
            <person name="Gaur A.F."/>
            <person name="Lemanski L.F."/>
            <person name="Dube D.K."/>
        </authorList>
    </citation>
    <scope>NUCLEOTIDE SEQUENCE [MRNA]</scope>
</reference>
<accession>P50208</accession>
<dbReference type="EMBL" id="U19238">
    <property type="protein sequence ID" value="AAA91634.1"/>
    <property type="molecule type" value="mRNA"/>
</dbReference>
<dbReference type="PIR" id="PC4071">
    <property type="entry name" value="PC4071"/>
</dbReference>
<dbReference type="SMR" id="P50208"/>
<dbReference type="GO" id="GO:0005634">
    <property type="term" value="C:nucleus"/>
    <property type="evidence" value="ECO:0007669"/>
    <property type="project" value="UniProtKB-SubCell"/>
</dbReference>
<dbReference type="GO" id="GO:0000981">
    <property type="term" value="F:DNA-binding transcription factor activity, RNA polymerase II-specific"/>
    <property type="evidence" value="ECO:0007669"/>
    <property type="project" value="InterPro"/>
</dbReference>
<dbReference type="GO" id="GO:0000978">
    <property type="term" value="F:RNA polymerase II cis-regulatory region sequence-specific DNA binding"/>
    <property type="evidence" value="ECO:0007669"/>
    <property type="project" value="TreeGrafter"/>
</dbReference>
<dbReference type="GO" id="GO:0009952">
    <property type="term" value="P:anterior/posterior pattern specification"/>
    <property type="evidence" value="ECO:0007669"/>
    <property type="project" value="TreeGrafter"/>
</dbReference>
<dbReference type="CDD" id="cd00086">
    <property type="entry name" value="homeodomain"/>
    <property type="match status" value="1"/>
</dbReference>
<dbReference type="FunFam" id="1.10.10.60:FF:000055">
    <property type="entry name" value="Homeobox protein Hox-A5"/>
    <property type="match status" value="1"/>
</dbReference>
<dbReference type="Gene3D" id="1.10.10.60">
    <property type="entry name" value="Homeodomain-like"/>
    <property type="match status" value="1"/>
</dbReference>
<dbReference type="InterPro" id="IPR050296">
    <property type="entry name" value="Antp_homeobox"/>
</dbReference>
<dbReference type="InterPro" id="IPR001356">
    <property type="entry name" value="HD"/>
</dbReference>
<dbReference type="InterPro" id="IPR020479">
    <property type="entry name" value="HD_metazoa"/>
</dbReference>
<dbReference type="InterPro" id="IPR017995">
    <property type="entry name" value="Homeobox_antennapedia"/>
</dbReference>
<dbReference type="InterPro" id="IPR001827">
    <property type="entry name" value="Homeobox_Antennapedia_CS"/>
</dbReference>
<dbReference type="InterPro" id="IPR017970">
    <property type="entry name" value="Homeobox_CS"/>
</dbReference>
<dbReference type="InterPro" id="IPR009057">
    <property type="entry name" value="Homeodomain-like_sf"/>
</dbReference>
<dbReference type="PANTHER" id="PTHR45659">
    <property type="entry name" value="HOMEOBOX PROTEIN HOX"/>
    <property type="match status" value="1"/>
</dbReference>
<dbReference type="PANTHER" id="PTHR45659:SF10">
    <property type="entry name" value="HOMEOBOX PROTEIN HOX-A5"/>
    <property type="match status" value="1"/>
</dbReference>
<dbReference type="Pfam" id="PF00046">
    <property type="entry name" value="Homeodomain"/>
    <property type="match status" value="1"/>
</dbReference>
<dbReference type="PRINTS" id="PR00025">
    <property type="entry name" value="ANTENNAPEDIA"/>
</dbReference>
<dbReference type="PRINTS" id="PR00024">
    <property type="entry name" value="HOMEOBOX"/>
</dbReference>
<dbReference type="SMART" id="SM00389">
    <property type="entry name" value="HOX"/>
    <property type="match status" value="1"/>
</dbReference>
<dbReference type="SUPFAM" id="SSF46689">
    <property type="entry name" value="Homeodomain-like"/>
    <property type="match status" value="1"/>
</dbReference>
<dbReference type="PROSITE" id="PS00032">
    <property type="entry name" value="ANTENNAPEDIA"/>
    <property type="match status" value="1"/>
</dbReference>
<dbReference type="PROSITE" id="PS00027">
    <property type="entry name" value="HOMEOBOX_1"/>
    <property type="match status" value="1"/>
</dbReference>
<dbReference type="PROSITE" id="PS50071">
    <property type="entry name" value="HOMEOBOX_2"/>
    <property type="match status" value="1"/>
</dbReference>
<comment type="function">
    <text evidence="1">Sequence-specific transcription factor which is part of a developmental regulatory system that provides cells with specific positional identities on the anterior-posterior axis.</text>
</comment>
<comment type="subcellular location">
    <subcellularLocation>
        <location>Nucleus</location>
    </subcellularLocation>
</comment>
<comment type="similarity">
    <text evidence="4">Belongs to the Antp homeobox family.</text>
</comment>
<organism>
    <name type="scientific">Ambystoma mexicanum</name>
    <name type="common">Axolotl</name>
    <dbReference type="NCBI Taxonomy" id="8296"/>
    <lineage>
        <taxon>Eukaryota</taxon>
        <taxon>Metazoa</taxon>
        <taxon>Chordata</taxon>
        <taxon>Craniata</taxon>
        <taxon>Vertebrata</taxon>
        <taxon>Euteleostomi</taxon>
        <taxon>Amphibia</taxon>
        <taxon>Batrachia</taxon>
        <taxon>Caudata</taxon>
        <taxon>Salamandroidea</taxon>
        <taxon>Ambystomatidae</taxon>
        <taxon>Ambystoma</taxon>
    </lineage>
</organism>
<name>HXA5_AMBME</name>
<feature type="chain" id="PRO_0000200066" description="Homeobox protein Hox-A5">
    <location>
        <begin position="1" status="less than"/>
        <end position="148"/>
    </location>
</feature>
<feature type="DNA-binding region" description="Homeobox" evidence="2">
    <location>
        <begin position="73"/>
        <end position="132"/>
    </location>
</feature>
<feature type="region of interest" description="Disordered" evidence="3">
    <location>
        <begin position="1"/>
        <end position="53"/>
    </location>
</feature>
<feature type="compositionally biased region" description="Basic and acidic residues" evidence="3">
    <location>
        <begin position="30"/>
        <end position="44"/>
    </location>
</feature>
<feature type="non-terminal residue">
    <location>
        <position position="1"/>
    </location>
</feature>
<proteinExistence type="evidence at transcript level"/>
<protein>
    <recommendedName>
        <fullName>Homeobox protein Hox-A5</fullName>
    </recommendedName>
</protein>
<evidence type="ECO:0000250" key="1"/>
<evidence type="ECO:0000255" key="2">
    <source>
        <dbReference type="PROSITE-ProRule" id="PRU00108"/>
    </source>
</evidence>
<evidence type="ECO:0000256" key="3">
    <source>
        <dbReference type="SAM" id="MobiDB-lite"/>
    </source>
</evidence>
<evidence type="ECO:0000305" key="4"/>
<gene>
    <name type="primary">HOXA5</name>
</gene>
<keyword id="KW-0217">Developmental protein</keyword>
<keyword id="KW-0238">DNA-binding</keyword>
<keyword id="KW-0371">Homeobox</keyword>
<keyword id="KW-0539">Nucleus</keyword>
<keyword id="KW-0804">Transcription</keyword>
<keyword id="KW-0805">Transcription regulation</keyword>
<sequence>VAVGSSSHISSRDGLGTSSGTEDDTPGAAGRREGKFTARSERTLGRAGGGPPQIYPWMRKLHISHDNIGGPRGKRARTAYTRYQTLELEKEFHFNRYLTRRRRIEIAHALCLSERQIKIWFQNRRMKWKKDNKLKSMSMAAAGGAFRP</sequence>